<protein>
    <recommendedName>
        <fullName>Protein Tat</fullName>
    </recommendedName>
    <alternativeName>
        <fullName>Transactivating regulatory protein</fullName>
    </alternativeName>
</protein>
<accession>P12512</accession>
<proteinExistence type="inferred from homology"/>
<comment type="function">
    <text evidence="2">Transcriptional activator that increases RNA Pol II processivity, thereby increasing the level of full-length viral transcripts. Recognizes a hairpin structure at the 5'-LTR of the nascent viral mRNAs referred to as the transactivation responsive RNA element (TAR) and recruits the cyclin T1-CDK9 complex (P-TEFb complex) that will in turn hyperphosphorylate the RNA polymerase II to allow efficient elongation. The CDK9 component of P-TEFb and other Tat-activated kinases hyperphosphorylate the C-terminus of RNA Pol II that becomes stabilized and much more processive. Other factors such as HTATSF1/Tat-SF1, SUPT5H/SPT5, and HTATIP2 are also important for Tat's function. Besides its effect on RNA Pol II processivity, Tat induces chromatin remodeling of proviral genes by recruiting the histone acetyltransferases (HATs) CREBBP, EP300 and PCAF to the chromatin. This also contributes to the increase in proviral transcription rate, especially when the provirus integrates in transcriptionally silent region of the host genome. To ensure maximal activation of the LTR, Tat mediates nuclear translocation of NF-kappa-B by interacting with host RELA. Through its interaction with host TBP, Tat may also modulate transcription initiation. Tat can reactivate a latently infected cell by penetrating in it and transactivating its LTR promoter. In the cytoplasm, Tat is thought to act as a translational activator of HIV-1 mRNAs.</text>
</comment>
<comment type="function">
    <text evidence="1">Extracellular circulating Tat can be endocytosed by surrounding uninfected cells via the binding to several surface receptors such as CD26, CXCR4, heparan sulfate proteoglycans (HSPG) or LDLR. Neurons are rarely infected, but they internalize Tat via their LDLR. Endosomal low pH allows Tat to cross the endosome membrane to enter the cytosol and eventually further translocate into the nucleus, thereby inducing severe cell dysfunctions ranging from cell activation to cell death. Through its interaction with nuclear HATs, Tat is potentially able to control the acetylation-dependent cellular gene expression. Tat seems to inhibit the HAT activity of KAT5/Tip60 and TAF1, and consequently modify the expression of specific cellular genes. Modulates the expression of many cellular genes involved in cell survival, proliferation or in coding for cytokines (such as IL10) or cytokine receptors. May be involved in the derepression of host interleukin IL2 expression. Mediates the activation of cyclin-dependent kinases and dysregulation of microtubule network. Tat plays a role in T-cell and neurons apoptosis. Tat induced neurotoxicity and apoptosis probably contribute to neuroAIDS. Host extracellular matrix metalloproteinase MMP1 cleaves Tat and decreases Tat's mediated neurotoxicity. Circulating Tat also acts as a chemokine-like and/or growth factor-like molecule that binds to specific receptors on the surface of the cells, affecting many cellular pathways. In the vascular system, Tat binds to ITGAV/ITGB3 and ITGA5/ITGB1 integrins dimers at the surface of endothelial cells and competes with bFGF for heparin-binding sites, leading to an excess of soluble bFGF. Binds to KDR/VEGFR-2. All these Tat-mediated effects enhance angiogenesis in Kaposi's sarcoma lesions (By similarity).</text>
</comment>
<comment type="subunit">
    <text evidence="1">Interacts with host CCNT1. Associates with the P-TEFb complex composed at least of Tat, P-TEFb (CDK9 and CCNT1), TAR RNA, RNA Pol II. Recruits the HATs CREBBP, TAF1/TFIID, EP300, PCAF and GCN5L2. Interacts with host KAT5/Tip60; this interaction targets the latter to degradation. Interacts with the host deacetylase SIRT1. Interacts with host capping enzyme RNGTT; this interaction stimulates RNGTT. Binds to host KDR, and to the host integrins ITGAV/ITGB3 and ITGA5/ITGB1. Interacts with host KPNB1/importin beta-1 without previous binding to KPNA1/importin alpha-1. Interacts with EIF2AK2. Interacts with host nucleosome assembly protein NAP1L1; this interaction may be required for the transport of Tat within the nucleus, since the two proteins interact at the nuclear rim. Interacts with host C1QBP/SF2P32; this interaction involves lysine-acetylated Tat. Interacts with the host chemokine receptors CCR2, CCR3 and CXCR4. Interacts with host DPP4/CD26; this interaction may trigger an anti-proliferative effect. Interacts with host LDLR. Interacts with the host extracellular matrix metalloproteinase MMP1. Interacts with host PRMT6; this interaction mediates Tat's methylation. Interacts with, and is ubiquitinated by MDM2/Hdm2. Interacts with host PSMC3 and HTATIP2. Interacts with STAB1; this interaction may overcome SATB1-mediated repression of IL2 and IL2RA (interleukin) in T cells by binding to the same domain than HDAC1. Interacts (when acetylated on Lys-50 and Lys-51) with human CDK13, thereby increasing HIV-1 mRNA splicing and promoting the production of the doubly spliced HIV-1 protein Nef (By similarity).</text>
</comment>
<comment type="subcellular location">
    <subcellularLocation>
        <location>Host nucleus</location>
        <location>Host nucleolus</location>
    </subcellularLocation>
    <subcellularLocation>
        <location>Host cytoplasm</location>
    </subcellularLocation>
    <subcellularLocation>
        <location>Secreted</location>
    </subcellularLocation>
    <text evidence="1">Probably localizes to both nuclear and nucleolar compartments. Nuclear localization is mediated through the interaction of the nuclear localization signal with importin KPNB1. Secretion occurs through a Golgi-independent pathway. Tat is released from infected cells to the extracellular space where it remains associated to the cell membrane, or is secreted into the cerebrospinal fluid and sera. Extracellular Tat can be endocytosed by surrounding uninfected cells via binding to several receptors depending on the cell type (By similarity).</text>
</comment>
<comment type="alternative products">
    <event type="alternative splicing"/>
    <isoform>
        <id>P12512-1</id>
        <name>Long</name>
        <sequence type="displayed"/>
    </isoform>
    <isoform>
        <id>P12512-2</id>
        <name>Short</name>
        <sequence type="not described"/>
    </isoform>
</comment>
<comment type="domain">
    <text evidence="1">The transactivation domain mediates the interaction with CCNT1, GCN5L2, and MDM2.</text>
</comment>
<comment type="domain">
    <text evidence="1">The Arg-rich RNA-binding region binds the TAR RNA. This region also mediates the nuclear localization through direct binding to KPNB1 and is involved in Tat's transfer across cell membranes (protein transduction). The same region is required for the interaction with EP300, PCAF, EIF2AK2 and KDR (By similarity).</text>
</comment>
<comment type="domain">
    <text evidence="1 5">The Cys-rich region may bind 2 zinc ions (Potential). This region is involved in binding to KAT5 (By similarity).</text>
</comment>
<comment type="domain">
    <text evidence="1">The cell attachment site mediates the interaction with ITGAV/ITGB3 and ITGA5/ITGB1 integrins, leading to vascular cell migration and invasion. This interaction also provides endothelial cells with the adhesion signal they require to grow in response to mitogens (By similarity).</text>
</comment>
<comment type="PTM">
    <text evidence="1">Acetylation by EP300, CREBBP, GCN5L2/GCN5 and PCAF regulates the transactivation activity of Tat. EP300-mediated acetylation of Lys-50 promotes dissociation of Tat from the TAR RNA through the competitive binding to PCAF's bromodomain. In addition, the non-acetylated Tat's N-terminus can also interact with PCAF. PCAF-mediated acetylation of Lys-28 enhances Tat's binding to CCNT1. Lys-50 is deacetylated by SIRT1 (By similarity).</text>
</comment>
<comment type="PTM">
    <text evidence="1">Phosphorylated by EIF2AK2 on serine and threonine residues adjacent to the basic region important for TAR RNA binding and function. Phosphorylation of Tat by EIF2AK2 is dependent on the prior activation of EIF2AK2 by dsRNA (By similarity).</text>
</comment>
<comment type="PTM">
    <text evidence="1">Asymmetrical arginine methylation by host PRMT6 seems to diminish the transactivation capacity of Tat and affects the interaction with host CCNT1.</text>
</comment>
<comment type="PTM">
    <text evidence="1">Polyubiquitination by MDM2 does not target Tat to degradation, but activates its transactivation function and fosters interaction with CCNT1 and TAR RNA.</text>
</comment>
<comment type="miscellaneous">
    <text>HIV-1 lineages are divided in three main groups, M (for Major), O (for Outlier), and N (for New, or Non-M, Non-O). The vast majority of strains found worldwide belong to the group M. Group O seems to be endemic to and largely confined to Cameroon and neighboring countries in West Central Africa, where these viruses represent a small minority of HIV-1 strains. The group N is represented by a limited number of isolates from Cameroonian persons. The group M is further subdivided in 9 clades or subtypes (A to D, F to H, J and K).</text>
</comment>
<comment type="miscellaneous">
    <molecule>Isoform Short</molecule>
    <text evidence="5">Expressed in the late stage of the infection cycle, when unspliced viral RNAs are exported to the cytoplasm by the viral Rev protein.</text>
</comment>
<comment type="similarity">
    <text evidence="5">Belongs to the lentiviruses Tat family.</text>
</comment>
<dbReference type="EMBL" id="M15896">
    <property type="protein sequence ID" value="AAB53949.1"/>
    <property type="molecule type" value="Genomic_RNA"/>
</dbReference>
<dbReference type="GO" id="GO:0005576">
    <property type="term" value="C:extracellular region"/>
    <property type="evidence" value="ECO:0007669"/>
    <property type="project" value="UniProtKB-SubCell"/>
</dbReference>
<dbReference type="GO" id="GO:0030430">
    <property type="term" value="C:host cell cytoplasm"/>
    <property type="evidence" value="ECO:0007669"/>
    <property type="project" value="UniProtKB-SubCell"/>
</dbReference>
<dbReference type="GO" id="GO:0044196">
    <property type="term" value="C:host cell nucleolus"/>
    <property type="evidence" value="ECO:0007669"/>
    <property type="project" value="UniProtKB-SubCell"/>
</dbReference>
<dbReference type="GO" id="GO:0046872">
    <property type="term" value="F:metal ion binding"/>
    <property type="evidence" value="ECO:0007669"/>
    <property type="project" value="UniProtKB-KW"/>
</dbReference>
<dbReference type="GO" id="GO:0003723">
    <property type="term" value="F:RNA binding"/>
    <property type="evidence" value="ECO:0007669"/>
    <property type="project" value="UniProtKB-KW"/>
</dbReference>
<keyword id="KW-0007">Acetylation</keyword>
<keyword id="KW-0010">Activator</keyword>
<keyword id="KW-0014">AIDS</keyword>
<keyword id="KW-0025">Alternative splicing</keyword>
<keyword id="KW-0053">Apoptosis</keyword>
<keyword id="KW-1035">Host cytoplasm</keyword>
<keyword id="KW-1048">Host nucleus</keyword>
<keyword id="KW-0945">Host-virus interaction</keyword>
<keyword id="KW-0479">Metal-binding</keyword>
<keyword id="KW-0488">Methylation</keyword>
<keyword id="KW-0597">Phosphoprotein</keyword>
<keyword id="KW-0694">RNA-binding</keyword>
<keyword id="KW-0964">Secreted</keyword>
<keyword id="KW-0804">Transcription</keyword>
<keyword id="KW-0805">Transcription regulation</keyword>
<keyword id="KW-0832">Ubl conjugation</keyword>
<keyword id="KW-0862">Zinc</keyword>
<reference key="1">
    <citation type="journal article" date="1989" name="AIDS Res. Hum. Retroviruses">
        <title>Molecular characterization of HIV-1 isolated from a serum collected in 1976: nucleotide sequence comparison to recent isolates and generation of hybrid HIV.</title>
        <authorList>
            <person name="Srinivasan A."/>
            <person name="York D."/>
            <person name="Butler D. Jr."/>
            <person name="Jannoun-Nasr R."/>
            <person name="Getchell J."/>
            <person name="McCormick J."/>
            <person name="Ou C.Y."/>
            <person name="Myers G."/>
            <person name="Smith T."/>
            <person name="Chen E."/>
        </authorList>
    </citation>
    <scope>NUCLEOTIDE SEQUENCE [GENOMIC RNA]</scope>
</reference>
<reference key="2">
    <citation type="journal article" date="2005" name="Microbes Infect.">
        <title>Decoding Tat: the biology of HIV Tat posttranslational modifications.</title>
        <authorList>
            <person name="Hetzer C."/>
            <person name="Dormeyer W."/>
            <person name="Schnolzer M."/>
            <person name="Ott M."/>
        </authorList>
    </citation>
    <scope>REVIEW</scope>
    <scope>ALTERNATIVE SPLICING</scope>
</reference>
<reference key="3">
    <citation type="journal article" date="2006" name="Front. Biosci.">
        <title>The multiple functions of HIV-1 Tat: proliferation versus apoptosis.</title>
        <authorList>
            <person name="Peruzzi F."/>
        </authorList>
    </citation>
    <scope>REVIEW</scope>
</reference>
<reference key="4">
    <citation type="journal article" date="2006" name="Microbes Infect.">
        <title>HIV tat and neurotoxicity.</title>
        <authorList>
            <person name="King J.E."/>
            <person name="Eugenin E.A."/>
            <person name="Buckner C.M."/>
            <person name="Berman J.W."/>
        </authorList>
    </citation>
    <scope>REVIEW</scope>
</reference>
<evidence type="ECO:0000250" key="1"/>
<evidence type="ECO:0000250" key="2">
    <source>
        <dbReference type="UniProtKB" id="P04608"/>
    </source>
</evidence>
<evidence type="ECO:0000255" key="3"/>
<evidence type="ECO:0000256" key="4">
    <source>
        <dbReference type="SAM" id="MobiDB-lite"/>
    </source>
</evidence>
<evidence type="ECO:0000305" key="5"/>
<organism>
    <name type="scientific">Human immunodeficiency virus type 1 group M subtype A (isolate Z321)</name>
    <name type="common">HIV-1</name>
    <dbReference type="NCBI Taxonomy" id="11692"/>
    <lineage>
        <taxon>Viruses</taxon>
        <taxon>Riboviria</taxon>
        <taxon>Pararnavirae</taxon>
        <taxon>Artverviricota</taxon>
        <taxon>Revtraviricetes</taxon>
        <taxon>Ortervirales</taxon>
        <taxon>Retroviridae</taxon>
        <taxon>Orthoretrovirinae</taxon>
        <taxon>Lentivirus</taxon>
        <taxon>Human immunodeficiency virus type 1</taxon>
    </lineage>
</organism>
<feature type="chain" id="PRO_0000085352" description="Protein Tat">
    <location>
        <begin position="1" status="less than"/>
        <end position="30"/>
    </location>
</feature>
<feature type="region of interest" description="Disordered" evidence="4">
    <location>
        <begin position="1"/>
        <end position="30"/>
    </location>
</feature>
<feature type="short sequence motif" description="Cell attachment site" evidence="3">
    <location>
        <begin position="6"/>
        <end position="8"/>
    </location>
</feature>
<feature type="compositionally biased region" description="Basic and acidic residues" evidence="4">
    <location>
        <begin position="13"/>
        <end position="30"/>
    </location>
</feature>
<feature type="non-terminal residue">
    <location>
        <position position="1"/>
    </location>
</feature>
<sequence>PLPTTRGNPTGPKESKKEVESKTETDPFAW</sequence>
<organismHost>
    <name type="scientific">Homo sapiens</name>
    <name type="common">Human</name>
    <dbReference type="NCBI Taxonomy" id="9606"/>
</organismHost>
<name>TAT_HV1ZH</name>